<protein>
    <recommendedName>
        <fullName>Autophagy-related protein 3</fullName>
    </recommendedName>
    <alternativeName>
        <fullName>Autophagy-related E2-like conjugation enzyme ATG3</fullName>
    </alternativeName>
</protein>
<accession>A5DN42</accession>
<reference key="1">
    <citation type="journal article" date="2009" name="Nature">
        <title>Evolution of pathogenicity and sexual reproduction in eight Candida genomes.</title>
        <authorList>
            <person name="Butler G."/>
            <person name="Rasmussen M.D."/>
            <person name="Lin M.F."/>
            <person name="Santos M.A.S."/>
            <person name="Sakthikumar S."/>
            <person name="Munro C.A."/>
            <person name="Rheinbay E."/>
            <person name="Grabherr M."/>
            <person name="Forche A."/>
            <person name="Reedy J.L."/>
            <person name="Agrafioti I."/>
            <person name="Arnaud M.B."/>
            <person name="Bates S."/>
            <person name="Brown A.J.P."/>
            <person name="Brunke S."/>
            <person name="Costanzo M.C."/>
            <person name="Fitzpatrick D.A."/>
            <person name="de Groot P.W.J."/>
            <person name="Harris D."/>
            <person name="Hoyer L.L."/>
            <person name="Hube B."/>
            <person name="Klis F.M."/>
            <person name="Kodira C."/>
            <person name="Lennard N."/>
            <person name="Logue M.E."/>
            <person name="Martin R."/>
            <person name="Neiman A.M."/>
            <person name="Nikolaou E."/>
            <person name="Quail M.A."/>
            <person name="Quinn J."/>
            <person name="Santos M.C."/>
            <person name="Schmitzberger F.F."/>
            <person name="Sherlock G."/>
            <person name="Shah P."/>
            <person name="Silverstein K.A.T."/>
            <person name="Skrzypek M.S."/>
            <person name="Soll D."/>
            <person name="Staggs R."/>
            <person name="Stansfield I."/>
            <person name="Stumpf M.P.H."/>
            <person name="Sudbery P.E."/>
            <person name="Srikantha T."/>
            <person name="Zeng Q."/>
            <person name="Berman J."/>
            <person name="Berriman M."/>
            <person name="Heitman J."/>
            <person name="Gow N.A.R."/>
            <person name="Lorenz M.C."/>
            <person name="Birren B.W."/>
            <person name="Kellis M."/>
            <person name="Cuomo C.A."/>
        </authorList>
    </citation>
    <scope>NUCLEOTIDE SEQUENCE [LARGE SCALE GENOMIC DNA]</scope>
    <source>
        <strain>ATCC 6260 / CBS 566 / DSM 6381 / JCM 1539 / NBRC 10279 / NRRL Y-324</strain>
    </source>
</reference>
<name>ATG3_PICGU</name>
<gene>
    <name type="primary">ATG3</name>
    <name type="ORF">PGUG_04693</name>
</gene>
<dbReference type="EMBL" id="CH408160">
    <property type="protein sequence ID" value="EDK40595.2"/>
    <property type="status" value="ALT_INIT"/>
    <property type="molecule type" value="Genomic_DNA"/>
</dbReference>
<dbReference type="RefSeq" id="XP_001482738.1">
    <property type="nucleotide sequence ID" value="XM_001482688.1"/>
</dbReference>
<dbReference type="SMR" id="A5DN42"/>
<dbReference type="FunCoup" id="A5DN42">
    <property type="interactions" value="1081"/>
</dbReference>
<dbReference type="STRING" id="294746.A5DN42"/>
<dbReference type="GeneID" id="5124746"/>
<dbReference type="KEGG" id="pgu:PGUG_04693"/>
<dbReference type="eggNOG" id="KOG2981">
    <property type="taxonomic scope" value="Eukaryota"/>
</dbReference>
<dbReference type="HOGENOM" id="CLU_027518_2_0_1"/>
<dbReference type="InParanoid" id="A5DN42"/>
<dbReference type="OrthoDB" id="1584384at2759"/>
<dbReference type="Proteomes" id="UP000001997">
    <property type="component" value="Unassembled WGS sequence"/>
</dbReference>
<dbReference type="GO" id="GO:0005829">
    <property type="term" value="C:cytosol"/>
    <property type="evidence" value="ECO:0007669"/>
    <property type="project" value="TreeGrafter"/>
</dbReference>
<dbReference type="GO" id="GO:0000407">
    <property type="term" value="C:phagophore assembly site"/>
    <property type="evidence" value="ECO:0007669"/>
    <property type="project" value="TreeGrafter"/>
</dbReference>
<dbReference type="GO" id="GO:0019776">
    <property type="term" value="F:Atg8-family ligase activity"/>
    <property type="evidence" value="ECO:0007669"/>
    <property type="project" value="TreeGrafter"/>
</dbReference>
<dbReference type="GO" id="GO:0000045">
    <property type="term" value="P:autophagosome assembly"/>
    <property type="evidence" value="ECO:0007669"/>
    <property type="project" value="TreeGrafter"/>
</dbReference>
<dbReference type="GO" id="GO:0000422">
    <property type="term" value="P:autophagy of mitochondrion"/>
    <property type="evidence" value="ECO:0007669"/>
    <property type="project" value="TreeGrafter"/>
</dbReference>
<dbReference type="GO" id="GO:0061723">
    <property type="term" value="P:glycophagy"/>
    <property type="evidence" value="ECO:0007669"/>
    <property type="project" value="TreeGrafter"/>
</dbReference>
<dbReference type="GO" id="GO:0044804">
    <property type="term" value="P:nucleophagy"/>
    <property type="evidence" value="ECO:0007669"/>
    <property type="project" value="TreeGrafter"/>
</dbReference>
<dbReference type="GO" id="GO:0015031">
    <property type="term" value="P:protein transport"/>
    <property type="evidence" value="ECO:0007669"/>
    <property type="project" value="UniProtKB-KW"/>
</dbReference>
<dbReference type="Gene3D" id="3.30.1460.50">
    <property type="match status" value="1"/>
</dbReference>
<dbReference type="InterPro" id="IPR007135">
    <property type="entry name" value="Atg3/Atg10"/>
</dbReference>
<dbReference type="PANTHER" id="PTHR12866">
    <property type="entry name" value="UBIQUITIN-LIKE-CONJUGATING ENZYME ATG3"/>
    <property type="match status" value="1"/>
</dbReference>
<dbReference type="PANTHER" id="PTHR12866:SF2">
    <property type="entry name" value="UBIQUITIN-LIKE-CONJUGATING ENZYME ATG3"/>
    <property type="match status" value="1"/>
</dbReference>
<dbReference type="Pfam" id="PF03987">
    <property type="entry name" value="Autophagy_act_C"/>
    <property type="match status" value="1"/>
</dbReference>
<evidence type="ECO:0000250" key="1"/>
<evidence type="ECO:0000305" key="2"/>
<feature type="chain" id="PRO_0000317827" description="Autophagy-related protein 3">
    <location>
        <begin position="1"/>
        <end position="293"/>
    </location>
</feature>
<feature type="region of interest" description="Flexible region" evidence="1">
    <location>
        <begin position="82"/>
        <end position="149"/>
    </location>
</feature>
<feature type="region of interest" description="Handle region" evidence="1">
    <location>
        <begin position="222"/>
        <end position="268"/>
    </location>
</feature>
<feature type="active site" description="Glycyl thioester intermediate" evidence="1">
    <location>
        <position position="218"/>
    </location>
</feature>
<proteinExistence type="inferred from homology"/>
<comment type="function">
    <text evidence="1">E2 conjugating enzyme required for the cytoplasm to vacuole transport (Cvt) and autophagy. Required for selective autophagic degradation of the nucleus (nucleophagy) as well as for mitophagy which contributes to regulate mitochondrial quantity and quality by eliminating the mitochondria to a basal level to fulfill cellular energy requirements and preventing excess ROS production. Responsible for the E2-like covalent binding of phosphatidylethanolamine to the C-terminal Gly of ATG8. The ATG12-ATG5 conjugate plays a role of an E3 and promotes the transfer of ATG8 from ATG3 to phosphatidylethanolamine (PE). This step is required for the membrane association of ATG8. The formation of the ATG8-phosphatidylethanolamine conjugate is essential for autophagy and for the cytoplasm to vacuole transport (Cvt). The ATG8-PE conjugate mediates tethering between adjacent membranes and stimulates membrane hemifusion, leading to expansion of the autophagosomal membrane during autophagy (By similarity).</text>
</comment>
<comment type="subunit">
    <text evidence="1">Monomer. Interacts with ATG8 through an intermediate thioester bond through the C-terminal Gly of ATG8. Also interacts with the 40 amino acid C-terminal region of the E1-like ATG7 enzyme. Also interacts with the ATG12-ATG5 conjugate.</text>
</comment>
<comment type="subcellular location">
    <subcellularLocation>
        <location evidence="1">Cytoplasm</location>
    </subcellularLocation>
</comment>
<comment type="domain">
    <text evidence="1">The N-terminal region is involved in phosphatidylethanolamine-binding and is required for ATG8-PE conjugation.</text>
</comment>
<comment type="domain">
    <text evidence="1">The flexible region (FR) is required for ATG7-binding.</text>
</comment>
<comment type="domain">
    <text evidence="1">The handle region (HR) contains the ATG8 interaction motif (AIM) and mediates binding to ATG8. It is crucial for the cytoplasm-to-vacuole targeting pathway (By similarity).</text>
</comment>
<comment type="similarity">
    <text evidence="2">Belongs to the ATG3 family.</text>
</comment>
<comment type="sequence caution" evidence="2">
    <conflict type="erroneous initiation">
        <sequence resource="EMBL-CDS" id="EDK40595"/>
    </conflict>
</comment>
<keyword id="KW-0072">Autophagy</keyword>
<keyword id="KW-0963">Cytoplasm</keyword>
<keyword id="KW-0653">Protein transport</keyword>
<keyword id="KW-1185">Reference proteome</keyword>
<keyword id="KW-0813">Transport</keyword>
<keyword id="KW-0833">Ubl conjugation pathway</keyword>
<sequence length="293" mass="33617">MLRSKLSSLREYLTPINHNSNYETSGEISPEEFVQAGDYLVYKFPTWQWGSAPKKLQKDFLPPDKQFLITKHVPSYQRAQSYLGNTEDLAEDEEELDDGWVKSHRLTHEDPKRDIATDKKVPDIEDLDDFIDEDAEDADGEEFQDLGNSNLRRYDLYITYSTSYRVPKMYLVGFNDNGIPLLPHQMFEDISGDYRDKTATIENLPVSFNTTSVSIHPCKHSSVMKVLMKHAKTSREKAREFEPEAFVTGENLEPATETTQDTGIRVDQYLVVFLKFIASVTPGIGYDYTMDAL</sequence>
<organism>
    <name type="scientific">Meyerozyma guilliermondii (strain ATCC 6260 / CBS 566 / DSM 6381 / JCM 1539 / NBRC 10279 / NRRL Y-324)</name>
    <name type="common">Yeast</name>
    <name type="synonym">Candida guilliermondii</name>
    <dbReference type="NCBI Taxonomy" id="294746"/>
    <lineage>
        <taxon>Eukaryota</taxon>
        <taxon>Fungi</taxon>
        <taxon>Dikarya</taxon>
        <taxon>Ascomycota</taxon>
        <taxon>Saccharomycotina</taxon>
        <taxon>Pichiomycetes</taxon>
        <taxon>Debaryomycetaceae</taxon>
        <taxon>Meyerozyma</taxon>
    </lineage>
</organism>